<gene>
    <name evidence="1" type="primary">mnmG</name>
    <name evidence="1" type="synonym">gidA</name>
    <name type="ordered locus">Spro_4908</name>
</gene>
<feature type="chain" id="PRO_0000345331" description="tRNA uridine 5-carboxymethylaminomethyl modification enzyme MnmG">
    <location>
        <begin position="1"/>
        <end position="629"/>
    </location>
</feature>
<feature type="binding site" evidence="1">
    <location>
        <begin position="13"/>
        <end position="18"/>
    </location>
    <ligand>
        <name>FAD</name>
        <dbReference type="ChEBI" id="CHEBI:57692"/>
    </ligand>
</feature>
<feature type="binding site" evidence="1">
    <location>
        <position position="125"/>
    </location>
    <ligand>
        <name>FAD</name>
        <dbReference type="ChEBI" id="CHEBI:57692"/>
    </ligand>
</feature>
<feature type="binding site" evidence="1">
    <location>
        <position position="180"/>
    </location>
    <ligand>
        <name>FAD</name>
        <dbReference type="ChEBI" id="CHEBI:57692"/>
    </ligand>
</feature>
<feature type="binding site" evidence="1">
    <location>
        <begin position="273"/>
        <end position="287"/>
    </location>
    <ligand>
        <name>NAD(+)</name>
        <dbReference type="ChEBI" id="CHEBI:57540"/>
    </ligand>
</feature>
<feature type="binding site" evidence="1">
    <location>
        <position position="370"/>
    </location>
    <ligand>
        <name>FAD</name>
        <dbReference type="ChEBI" id="CHEBI:57692"/>
    </ligand>
</feature>
<sequence length="629" mass="70043">MFYPEQFDVIIIGGGHAGTEAAMAAARMGRQTLLLTHNIDTLGQMSCNPAIGGIGKGHLVKEIDALGGLMATAIDHAGIQFRILNASKGPAVRATRAQADRVLYRQAVRTALENQPNLMIFQQPVEDLIVENDRVVGAVTQMGLKFRAKAVVLTVGTFLDGKIHIGLENYSGGRAGDPPSISLSQRLRELPLRVNRLKTGTPPRIDARSIDFSVLAPQHGDTPIPVFSFMGNAGQHPEQMACYITYTNEKTHDVIRNNLDRSPMYAGIIEGIGPRYCPSIEDKVMRFADRNAHQIFLEPEGLTSNEIYPNGISTSLPFDVQMQIVRSMEGMQNARIIRPGYAIEYDFFDPRDLKPTLESKFIQGLFFAGQINGTTGYEEAAAQGLLAGLNAGRYANEDEGWSPRRDQAYLGVLVDDLSTLGTKEPYRMFTSRAEYRLMLREDNADLRLTEKGRELGLVDDARWARFSEKLEHIEQERQRLRDIWMHPHAENVEQVNALLKAPLSREANGEELLRRPEMDYTQLTSVAAFAPPLADTQAAEQVEIQVKYEGYIARQQEEIEKQQRNENTVLPLDLDYQQVSGLSNEVIAKLNDHKPNSIGQASRISGITPAAISILLIWLKKQGLLRRSA</sequence>
<protein>
    <recommendedName>
        <fullName evidence="1">tRNA uridine 5-carboxymethylaminomethyl modification enzyme MnmG</fullName>
    </recommendedName>
    <alternativeName>
        <fullName evidence="1">Glucose-inhibited division protein A</fullName>
    </alternativeName>
</protein>
<proteinExistence type="inferred from homology"/>
<comment type="function">
    <text evidence="1">NAD-binding protein involved in the addition of a carboxymethylaminomethyl (cmnm) group at the wobble position (U34) of certain tRNAs, forming tRNA-cmnm(5)s(2)U34.</text>
</comment>
<comment type="cofactor">
    <cofactor evidence="1">
        <name>FAD</name>
        <dbReference type="ChEBI" id="CHEBI:57692"/>
    </cofactor>
</comment>
<comment type="subunit">
    <text evidence="1">Homodimer. Heterotetramer of two MnmE and two MnmG subunits.</text>
</comment>
<comment type="subcellular location">
    <subcellularLocation>
        <location evidence="1">Cytoplasm</location>
    </subcellularLocation>
</comment>
<comment type="similarity">
    <text evidence="1">Belongs to the MnmG family.</text>
</comment>
<keyword id="KW-0963">Cytoplasm</keyword>
<keyword id="KW-0274">FAD</keyword>
<keyword id="KW-0285">Flavoprotein</keyword>
<keyword id="KW-0520">NAD</keyword>
<keyword id="KW-0819">tRNA processing</keyword>
<name>MNMG_SERP5</name>
<evidence type="ECO:0000255" key="1">
    <source>
        <dbReference type="HAMAP-Rule" id="MF_00129"/>
    </source>
</evidence>
<organism>
    <name type="scientific">Serratia proteamaculans (strain 568)</name>
    <dbReference type="NCBI Taxonomy" id="399741"/>
    <lineage>
        <taxon>Bacteria</taxon>
        <taxon>Pseudomonadati</taxon>
        <taxon>Pseudomonadota</taxon>
        <taxon>Gammaproteobacteria</taxon>
        <taxon>Enterobacterales</taxon>
        <taxon>Yersiniaceae</taxon>
        <taxon>Serratia</taxon>
    </lineage>
</organism>
<dbReference type="EMBL" id="CP000826">
    <property type="protein sequence ID" value="ABV44000.1"/>
    <property type="molecule type" value="Genomic_DNA"/>
</dbReference>
<dbReference type="SMR" id="A8GLL0"/>
<dbReference type="STRING" id="399741.Spro_4908"/>
<dbReference type="KEGG" id="spe:Spro_4908"/>
<dbReference type="eggNOG" id="COG0445">
    <property type="taxonomic scope" value="Bacteria"/>
</dbReference>
<dbReference type="HOGENOM" id="CLU_007831_2_2_6"/>
<dbReference type="OrthoDB" id="9815560at2"/>
<dbReference type="GO" id="GO:0005829">
    <property type="term" value="C:cytosol"/>
    <property type="evidence" value="ECO:0007669"/>
    <property type="project" value="TreeGrafter"/>
</dbReference>
<dbReference type="GO" id="GO:0050660">
    <property type="term" value="F:flavin adenine dinucleotide binding"/>
    <property type="evidence" value="ECO:0007669"/>
    <property type="project" value="UniProtKB-UniRule"/>
</dbReference>
<dbReference type="GO" id="GO:0030488">
    <property type="term" value="P:tRNA methylation"/>
    <property type="evidence" value="ECO:0007669"/>
    <property type="project" value="TreeGrafter"/>
</dbReference>
<dbReference type="GO" id="GO:0002098">
    <property type="term" value="P:tRNA wobble uridine modification"/>
    <property type="evidence" value="ECO:0007669"/>
    <property type="project" value="InterPro"/>
</dbReference>
<dbReference type="FunFam" id="1.10.10.1800:FF:000001">
    <property type="entry name" value="tRNA uridine 5-carboxymethylaminomethyl modification enzyme MnmG"/>
    <property type="match status" value="1"/>
</dbReference>
<dbReference type="FunFam" id="1.10.150.570:FF:000001">
    <property type="entry name" value="tRNA uridine 5-carboxymethylaminomethyl modification enzyme MnmG"/>
    <property type="match status" value="1"/>
</dbReference>
<dbReference type="FunFam" id="3.50.50.60:FF:000002">
    <property type="entry name" value="tRNA uridine 5-carboxymethylaminomethyl modification enzyme MnmG"/>
    <property type="match status" value="1"/>
</dbReference>
<dbReference type="FunFam" id="3.50.50.60:FF:000010">
    <property type="entry name" value="tRNA uridine 5-carboxymethylaminomethyl modification enzyme MnmG"/>
    <property type="match status" value="1"/>
</dbReference>
<dbReference type="Gene3D" id="3.50.50.60">
    <property type="entry name" value="FAD/NAD(P)-binding domain"/>
    <property type="match status" value="2"/>
</dbReference>
<dbReference type="Gene3D" id="1.10.150.570">
    <property type="entry name" value="GidA associated domain, C-terminal subdomain"/>
    <property type="match status" value="1"/>
</dbReference>
<dbReference type="Gene3D" id="1.10.10.1800">
    <property type="entry name" value="tRNA uridine 5-carboxymethylaminomethyl modification enzyme MnmG/GidA"/>
    <property type="match status" value="1"/>
</dbReference>
<dbReference type="HAMAP" id="MF_00129">
    <property type="entry name" value="MnmG_GidA"/>
    <property type="match status" value="1"/>
</dbReference>
<dbReference type="InterPro" id="IPR036188">
    <property type="entry name" value="FAD/NAD-bd_sf"/>
</dbReference>
<dbReference type="InterPro" id="IPR049312">
    <property type="entry name" value="GIDA_C_N"/>
</dbReference>
<dbReference type="InterPro" id="IPR004416">
    <property type="entry name" value="MnmG"/>
</dbReference>
<dbReference type="InterPro" id="IPR002218">
    <property type="entry name" value="MnmG-rel"/>
</dbReference>
<dbReference type="InterPro" id="IPR020595">
    <property type="entry name" value="MnmG-rel_CS"/>
</dbReference>
<dbReference type="InterPro" id="IPR026904">
    <property type="entry name" value="MnmG_C"/>
</dbReference>
<dbReference type="InterPro" id="IPR047001">
    <property type="entry name" value="MnmG_C_subdom"/>
</dbReference>
<dbReference type="InterPro" id="IPR044920">
    <property type="entry name" value="MnmG_C_subdom_sf"/>
</dbReference>
<dbReference type="InterPro" id="IPR040131">
    <property type="entry name" value="MnmG_N"/>
</dbReference>
<dbReference type="NCBIfam" id="TIGR00136">
    <property type="entry name" value="mnmG_gidA"/>
    <property type="match status" value="1"/>
</dbReference>
<dbReference type="PANTHER" id="PTHR11806">
    <property type="entry name" value="GLUCOSE INHIBITED DIVISION PROTEIN A"/>
    <property type="match status" value="1"/>
</dbReference>
<dbReference type="PANTHER" id="PTHR11806:SF0">
    <property type="entry name" value="PROTEIN MTO1 HOMOLOG, MITOCHONDRIAL"/>
    <property type="match status" value="1"/>
</dbReference>
<dbReference type="Pfam" id="PF01134">
    <property type="entry name" value="GIDA"/>
    <property type="match status" value="1"/>
</dbReference>
<dbReference type="Pfam" id="PF21680">
    <property type="entry name" value="GIDA_C_1st"/>
    <property type="match status" value="1"/>
</dbReference>
<dbReference type="Pfam" id="PF13932">
    <property type="entry name" value="SAM_GIDA_C"/>
    <property type="match status" value="1"/>
</dbReference>
<dbReference type="SMART" id="SM01228">
    <property type="entry name" value="GIDA_assoc_3"/>
    <property type="match status" value="1"/>
</dbReference>
<dbReference type="SUPFAM" id="SSF51905">
    <property type="entry name" value="FAD/NAD(P)-binding domain"/>
    <property type="match status" value="1"/>
</dbReference>
<dbReference type="PROSITE" id="PS01280">
    <property type="entry name" value="GIDA_1"/>
    <property type="match status" value="1"/>
</dbReference>
<dbReference type="PROSITE" id="PS01281">
    <property type="entry name" value="GIDA_2"/>
    <property type="match status" value="1"/>
</dbReference>
<accession>A8GLL0</accession>
<reference key="1">
    <citation type="submission" date="2007-09" db="EMBL/GenBank/DDBJ databases">
        <title>Complete sequence of chromosome of Serratia proteamaculans 568.</title>
        <authorList>
            <consortium name="US DOE Joint Genome Institute"/>
            <person name="Copeland A."/>
            <person name="Lucas S."/>
            <person name="Lapidus A."/>
            <person name="Barry K."/>
            <person name="Glavina del Rio T."/>
            <person name="Dalin E."/>
            <person name="Tice H."/>
            <person name="Pitluck S."/>
            <person name="Chain P."/>
            <person name="Malfatti S."/>
            <person name="Shin M."/>
            <person name="Vergez L."/>
            <person name="Schmutz J."/>
            <person name="Larimer F."/>
            <person name="Land M."/>
            <person name="Hauser L."/>
            <person name="Kyrpides N."/>
            <person name="Kim E."/>
            <person name="Taghavi S."/>
            <person name="Newman L."/>
            <person name="Vangronsveld J."/>
            <person name="van der Lelie D."/>
            <person name="Richardson P."/>
        </authorList>
    </citation>
    <scope>NUCLEOTIDE SEQUENCE [LARGE SCALE GENOMIC DNA]</scope>
    <source>
        <strain>568</strain>
    </source>
</reference>